<reference key="1">
    <citation type="submission" date="2003-06" db="EMBL/GenBank/DDBJ databases">
        <title>The complete genome sequence of Haemophilus ducreyi.</title>
        <authorList>
            <person name="Munson R.S. Jr."/>
            <person name="Ray W.C."/>
            <person name="Mahairas G."/>
            <person name="Sabo P."/>
            <person name="Mungur R."/>
            <person name="Johnson L."/>
            <person name="Nguyen D."/>
            <person name="Wang J."/>
            <person name="Forst C."/>
            <person name="Hood L."/>
        </authorList>
    </citation>
    <scope>NUCLEOTIDE SEQUENCE [LARGE SCALE GENOMIC DNA]</scope>
    <source>
        <strain>35000HP / ATCC 700724</strain>
    </source>
</reference>
<accession>Q7VLN6</accession>
<evidence type="ECO:0000255" key="1">
    <source>
        <dbReference type="HAMAP-Rule" id="MF_01886"/>
    </source>
</evidence>
<comment type="function">
    <text evidence="1">Catalyzes the formation of N(4)-acetylcytidine (ac(4)C) at the wobble position of tRNA(Met), by using acetyl-CoA as an acetyl donor and ATP (or GTP).</text>
</comment>
<comment type="catalytic activity">
    <reaction evidence="1">
        <text>cytidine(34) in elongator tRNA(Met) + acetyl-CoA + ATP + H2O = N(4)-acetylcytidine(34) in elongator tRNA(Met) + ADP + phosphate + CoA + H(+)</text>
        <dbReference type="Rhea" id="RHEA:43788"/>
        <dbReference type="Rhea" id="RHEA-COMP:10693"/>
        <dbReference type="Rhea" id="RHEA-COMP:10694"/>
        <dbReference type="ChEBI" id="CHEBI:15377"/>
        <dbReference type="ChEBI" id="CHEBI:15378"/>
        <dbReference type="ChEBI" id="CHEBI:30616"/>
        <dbReference type="ChEBI" id="CHEBI:43474"/>
        <dbReference type="ChEBI" id="CHEBI:57287"/>
        <dbReference type="ChEBI" id="CHEBI:57288"/>
        <dbReference type="ChEBI" id="CHEBI:74900"/>
        <dbReference type="ChEBI" id="CHEBI:82748"/>
        <dbReference type="ChEBI" id="CHEBI:456216"/>
        <dbReference type="EC" id="2.3.1.193"/>
    </reaction>
</comment>
<comment type="subcellular location">
    <subcellularLocation>
        <location evidence="1">Cytoplasm</location>
    </subcellularLocation>
</comment>
<comment type="similarity">
    <text evidence="1">Belongs to the RNA cytidine acetyltransferase family. TmcA subfamily.</text>
</comment>
<sequence length="598" mass="68448">MRQLVILSTMPPIQGGVLLNSQNFSKAKQFLGQEYPFALYDMRSENGICFNLEAFAIIVGTIQENGTLYLICPNWHSVEQQIDVDAIRWNGGVAIACPHFFQHFKRLINKFGFEVTSRPQQPFIKTAPSYPAKLIQFTDEQQNILQKLPLDPAEIHIITAARGRGKSTLAGKLAEQFAKTEQVILTAHRSSSIQKILQTASINIPFFAPDKLLNLIETKQISADHLLFIDEAACIPLPILQQLGNYFKKVILTTTTQNYEGTGRGFKLKLVKQLHRTTKEWQLFQPLRWSNHDRLEQFTNELLLLNDELIPLDQNSQFYHLLANAHYKTTATDLRRLFDADQQLFHQCYDKNQRLMAGIWAVKEGELSQDLAEAIWAGKRRPAGNLVAQYLCCQGNLIEACQLKSIRISRIAVQPDLQNQGIGSQLVTDFMQKMQKNNKNRPLDFISVSFGITPHLLTFWRRNGFQLVQITPTKEASSGYHSAMMLYPLSQQGKQFVTKAVKQFERDLALQPFYPTLKNCLAIPAQVENEMNQDDWQNLHGFAFAQRSLANCYTSLKRLYITHQAQLTILAPLFTHRYPANQKVWLQQCRIAIRPFIQ</sequence>
<dbReference type="EC" id="2.3.1.193" evidence="1"/>
<dbReference type="EMBL" id="AE017143">
    <property type="protein sequence ID" value="AAP96199.1"/>
    <property type="molecule type" value="Genomic_DNA"/>
</dbReference>
<dbReference type="RefSeq" id="WP_010945248.1">
    <property type="nucleotide sequence ID" value="NC_002940.2"/>
</dbReference>
<dbReference type="SMR" id="Q7VLN6"/>
<dbReference type="STRING" id="233412.HD_1386"/>
<dbReference type="KEGG" id="hdu:HD_1386"/>
<dbReference type="eggNOG" id="COG1444">
    <property type="taxonomic scope" value="Bacteria"/>
</dbReference>
<dbReference type="HOGENOM" id="CLU_004652_1_1_6"/>
<dbReference type="OrthoDB" id="5578851at2"/>
<dbReference type="Proteomes" id="UP000001022">
    <property type="component" value="Chromosome"/>
</dbReference>
<dbReference type="GO" id="GO:0005737">
    <property type="term" value="C:cytoplasm"/>
    <property type="evidence" value="ECO:0007669"/>
    <property type="project" value="UniProtKB-SubCell"/>
</dbReference>
<dbReference type="GO" id="GO:1990883">
    <property type="term" value="F:18S rRNA cytidine N-acetyltransferase activity"/>
    <property type="evidence" value="ECO:0007669"/>
    <property type="project" value="TreeGrafter"/>
</dbReference>
<dbReference type="GO" id="GO:0005524">
    <property type="term" value="F:ATP binding"/>
    <property type="evidence" value="ECO:0007669"/>
    <property type="project" value="UniProtKB-UniRule"/>
</dbReference>
<dbReference type="GO" id="GO:0000049">
    <property type="term" value="F:tRNA binding"/>
    <property type="evidence" value="ECO:0007669"/>
    <property type="project" value="UniProtKB-UniRule"/>
</dbReference>
<dbReference type="GO" id="GO:0051392">
    <property type="term" value="F:tRNA N4-acetyltransferase activity"/>
    <property type="evidence" value="ECO:0007669"/>
    <property type="project" value="UniProtKB-UniRule"/>
</dbReference>
<dbReference type="GO" id="GO:1904812">
    <property type="term" value="P:rRNA acetylation involved in maturation of SSU-rRNA"/>
    <property type="evidence" value="ECO:0007669"/>
    <property type="project" value="TreeGrafter"/>
</dbReference>
<dbReference type="GO" id="GO:0051391">
    <property type="term" value="P:tRNA acetylation"/>
    <property type="evidence" value="ECO:0007669"/>
    <property type="project" value="UniProtKB-UniRule"/>
</dbReference>
<dbReference type="GO" id="GO:0002101">
    <property type="term" value="P:tRNA wobble cytosine modification"/>
    <property type="evidence" value="ECO:0007669"/>
    <property type="project" value="UniProtKB-UniRule"/>
</dbReference>
<dbReference type="CDD" id="cd04301">
    <property type="entry name" value="NAT_SF"/>
    <property type="match status" value="1"/>
</dbReference>
<dbReference type="Gene3D" id="3.40.50.11040">
    <property type="match status" value="1"/>
</dbReference>
<dbReference type="Gene3D" id="3.40.630.30">
    <property type="match status" value="1"/>
</dbReference>
<dbReference type="Gene3D" id="3.40.50.300">
    <property type="entry name" value="P-loop containing nucleotide triphosphate hydrolases"/>
    <property type="match status" value="1"/>
</dbReference>
<dbReference type="Gene3D" id="1.20.120.890">
    <property type="entry name" value="tRNA(Met) cytidine acetyltransferase, tail domain"/>
    <property type="match status" value="1"/>
</dbReference>
<dbReference type="HAMAP" id="MF_01886">
    <property type="entry name" value="tRNA_acetyltr_TmcA"/>
    <property type="match status" value="1"/>
</dbReference>
<dbReference type="InterPro" id="IPR016181">
    <property type="entry name" value="Acyl_CoA_acyltransferase"/>
</dbReference>
<dbReference type="InterPro" id="IPR000182">
    <property type="entry name" value="GNAT_dom"/>
</dbReference>
<dbReference type="InterPro" id="IPR007807">
    <property type="entry name" value="NAT10/TcmA_helicase"/>
</dbReference>
<dbReference type="InterPro" id="IPR027417">
    <property type="entry name" value="P-loop_NTPase"/>
</dbReference>
<dbReference type="InterPro" id="IPR032672">
    <property type="entry name" value="TmcA/NAT10/Kre33"/>
</dbReference>
<dbReference type="InterPro" id="IPR038321">
    <property type="entry name" value="TmcA_C_sf"/>
</dbReference>
<dbReference type="InterPro" id="IPR033442">
    <property type="entry name" value="TmcA_tRNA_bind"/>
</dbReference>
<dbReference type="InterPro" id="IPR024914">
    <property type="entry name" value="tRNA_acetyltr_TmcA"/>
</dbReference>
<dbReference type="PANTHER" id="PTHR10925">
    <property type="entry name" value="N-ACETYLTRANSFERASE 10"/>
    <property type="match status" value="1"/>
</dbReference>
<dbReference type="PANTHER" id="PTHR10925:SF5">
    <property type="entry name" value="RNA CYTIDINE ACETYLTRANSFERASE"/>
    <property type="match status" value="1"/>
</dbReference>
<dbReference type="Pfam" id="PF13718">
    <property type="entry name" value="GNAT_acetyltr_2"/>
    <property type="match status" value="2"/>
</dbReference>
<dbReference type="Pfam" id="PF05127">
    <property type="entry name" value="NAT10_TcmA_helicase"/>
    <property type="match status" value="1"/>
</dbReference>
<dbReference type="Pfam" id="PF17176">
    <property type="entry name" value="tRNA_bind_3"/>
    <property type="match status" value="1"/>
</dbReference>
<dbReference type="SUPFAM" id="SSF55729">
    <property type="entry name" value="Acyl-CoA N-acyltransferases (Nat)"/>
    <property type="match status" value="1"/>
</dbReference>
<dbReference type="SUPFAM" id="SSF52540">
    <property type="entry name" value="P-loop containing nucleoside triphosphate hydrolases"/>
    <property type="match status" value="1"/>
</dbReference>
<dbReference type="PROSITE" id="PS51186">
    <property type="entry name" value="GNAT"/>
    <property type="match status" value="1"/>
</dbReference>
<organism>
    <name type="scientific">Haemophilus ducreyi (strain 35000HP / ATCC 700724)</name>
    <dbReference type="NCBI Taxonomy" id="233412"/>
    <lineage>
        <taxon>Bacteria</taxon>
        <taxon>Pseudomonadati</taxon>
        <taxon>Pseudomonadota</taxon>
        <taxon>Gammaproteobacteria</taxon>
        <taxon>Pasteurellales</taxon>
        <taxon>Pasteurellaceae</taxon>
        <taxon>Haemophilus</taxon>
    </lineage>
</organism>
<protein>
    <recommendedName>
        <fullName evidence="1">tRNA(Met) cytidine acetyltransferase TmcA</fullName>
        <ecNumber evidence="1">2.3.1.193</ecNumber>
    </recommendedName>
</protein>
<proteinExistence type="inferred from homology"/>
<gene>
    <name evidence="1" type="primary">tmcA</name>
    <name type="ordered locus">HD_1386</name>
</gene>
<keyword id="KW-0012">Acyltransferase</keyword>
<keyword id="KW-0067">ATP-binding</keyword>
<keyword id="KW-0963">Cytoplasm</keyword>
<keyword id="KW-0547">Nucleotide-binding</keyword>
<keyword id="KW-1185">Reference proteome</keyword>
<keyword id="KW-0694">RNA-binding</keyword>
<keyword id="KW-0808">Transferase</keyword>
<keyword id="KW-0819">tRNA processing</keyword>
<keyword id="KW-0820">tRNA-binding</keyword>
<feature type="chain" id="PRO_0000403120" description="tRNA(Met) cytidine acetyltransferase TmcA">
    <location>
        <begin position="1"/>
        <end position="598"/>
    </location>
</feature>
<feature type="domain" description="N-acetyltransferase" evidence="1">
    <location>
        <begin position="332"/>
        <end position="490"/>
    </location>
</feature>
<feature type="binding site" evidence="1">
    <location>
        <position position="141"/>
    </location>
    <ligand>
        <name>ATP</name>
        <dbReference type="ChEBI" id="CHEBI:30616"/>
    </ligand>
</feature>
<feature type="binding site" evidence="1">
    <location>
        <begin position="163"/>
        <end position="172"/>
    </location>
    <ligand>
        <name>ATP</name>
        <dbReference type="ChEBI" id="CHEBI:30616"/>
    </ligand>
</feature>
<feature type="binding site" evidence="1">
    <location>
        <position position="288"/>
    </location>
    <ligand>
        <name>ATP</name>
        <dbReference type="ChEBI" id="CHEBI:30616"/>
    </ligand>
</feature>
<feature type="binding site" evidence="1">
    <location>
        <begin position="411"/>
        <end position="413"/>
    </location>
    <ligand>
        <name>acetyl-CoA</name>
        <dbReference type="ChEBI" id="CHEBI:57288"/>
    </ligand>
</feature>
<feature type="binding site" evidence="1">
    <location>
        <begin position="418"/>
        <end position="424"/>
    </location>
    <ligand>
        <name>acetyl-CoA</name>
        <dbReference type="ChEBI" id="CHEBI:57288"/>
    </ligand>
</feature>
<feature type="binding site" evidence="1">
    <location>
        <position position="462"/>
    </location>
    <ligand>
        <name>acetyl-CoA</name>
        <dbReference type="ChEBI" id="CHEBI:57288"/>
    </ligand>
</feature>
<name>TMCA_HAEDU</name>